<dbReference type="EMBL" id="L43560">
    <property type="protein sequence ID" value="AAB02791.1"/>
    <property type="molecule type" value="mRNA"/>
</dbReference>
<dbReference type="PIR" id="PC4054">
    <property type="entry name" value="PC4054"/>
</dbReference>
<dbReference type="SMR" id="Q90233"/>
<dbReference type="GO" id="GO:0031430">
    <property type="term" value="C:M band"/>
    <property type="evidence" value="ECO:0007669"/>
    <property type="project" value="TreeGrafter"/>
</dbReference>
<dbReference type="GO" id="GO:0032982">
    <property type="term" value="C:myosin filament"/>
    <property type="evidence" value="ECO:0007669"/>
    <property type="project" value="UniProtKB-KW"/>
</dbReference>
<dbReference type="GO" id="GO:0003779">
    <property type="term" value="F:actin binding"/>
    <property type="evidence" value="ECO:0007669"/>
    <property type="project" value="UniProtKB-KW"/>
</dbReference>
<dbReference type="GO" id="GO:0032036">
    <property type="term" value="F:myosin heavy chain binding"/>
    <property type="evidence" value="ECO:0007669"/>
    <property type="project" value="TreeGrafter"/>
</dbReference>
<dbReference type="GO" id="GO:0007155">
    <property type="term" value="P:cell adhesion"/>
    <property type="evidence" value="ECO:0007669"/>
    <property type="project" value="UniProtKB-KW"/>
</dbReference>
<dbReference type="GO" id="GO:0045214">
    <property type="term" value="P:sarcomere organization"/>
    <property type="evidence" value="ECO:0007669"/>
    <property type="project" value="TreeGrafter"/>
</dbReference>
<dbReference type="GO" id="GO:0055010">
    <property type="term" value="P:ventricular cardiac muscle tissue morphogenesis"/>
    <property type="evidence" value="ECO:0007669"/>
    <property type="project" value="TreeGrafter"/>
</dbReference>
<dbReference type="CDD" id="cd00096">
    <property type="entry name" value="Ig"/>
    <property type="match status" value="2"/>
</dbReference>
<dbReference type="FunFam" id="2.60.40.10:FF:000070">
    <property type="entry name" value="Myosin-binding protein C, slow type"/>
    <property type="match status" value="1"/>
</dbReference>
<dbReference type="FunFam" id="2.60.40.10:FF:000081">
    <property type="entry name" value="Myosin-binding protein C, slow type"/>
    <property type="match status" value="1"/>
</dbReference>
<dbReference type="FunFam" id="2.60.40.10:FF:000085">
    <property type="entry name" value="Myosin-binding protein C, slow type"/>
    <property type="match status" value="1"/>
</dbReference>
<dbReference type="FunFam" id="2.60.40.10:FF:000111">
    <property type="entry name" value="Myosin-binding protein C, slow type"/>
    <property type="match status" value="1"/>
</dbReference>
<dbReference type="Gene3D" id="2.60.40.10">
    <property type="entry name" value="Immunoglobulins"/>
    <property type="match status" value="5"/>
</dbReference>
<dbReference type="InterPro" id="IPR007110">
    <property type="entry name" value="Ig-like_dom"/>
</dbReference>
<dbReference type="InterPro" id="IPR036179">
    <property type="entry name" value="Ig-like_dom_sf"/>
</dbReference>
<dbReference type="InterPro" id="IPR013783">
    <property type="entry name" value="Ig-like_fold"/>
</dbReference>
<dbReference type="InterPro" id="IPR013098">
    <property type="entry name" value="Ig_I-set"/>
</dbReference>
<dbReference type="InterPro" id="IPR003599">
    <property type="entry name" value="Ig_sub"/>
</dbReference>
<dbReference type="InterPro" id="IPR003598">
    <property type="entry name" value="Ig_sub2"/>
</dbReference>
<dbReference type="InterPro" id="IPR040849">
    <property type="entry name" value="MyBP-C_THB"/>
</dbReference>
<dbReference type="InterPro" id="IPR050964">
    <property type="entry name" value="Striated_Muscle_Regulatory"/>
</dbReference>
<dbReference type="PANTHER" id="PTHR13817:SF20">
    <property type="entry name" value="MYOSIN-BINDING PROTEIN C, CARDIAC-TYPE"/>
    <property type="match status" value="1"/>
</dbReference>
<dbReference type="PANTHER" id="PTHR13817">
    <property type="entry name" value="TITIN"/>
    <property type="match status" value="1"/>
</dbReference>
<dbReference type="Pfam" id="PF07679">
    <property type="entry name" value="I-set"/>
    <property type="match status" value="3"/>
</dbReference>
<dbReference type="Pfam" id="PF18362">
    <property type="entry name" value="THB"/>
    <property type="match status" value="1"/>
</dbReference>
<dbReference type="SMART" id="SM00409">
    <property type="entry name" value="IG"/>
    <property type="match status" value="3"/>
</dbReference>
<dbReference type="SMART" id="SM00408">
    <property type="entry name" value="IGc2"/>
    <property type="match status" value="2"/>
</dbReference>
<dbReference type="SUPFAM" id="SSF48726">
    <property type="entry name" value="Immunoglobulin"/>
    <property type="match status" value="4"/>
</dbReference>
<dbReference type="PROSITE" id="PS50835">
    <property type="entry name" value="IG_LIKE"/>
    <property type="match status" value="2"/>
</dbReference>
<reference key="1">
    <citation type="journal article" date="1995" name="Biochem. Biophys. Res. Commun.">
        <title>Cloning, sequencing and expression of an isoform of cardiac C-protein from the Mexican axolotl (Ambystoma mexicanum).</title>
        <authorList>
            <person name="Ward S.M."/>
            <person name="Lemanski L.F."/>
            <person name="Eiginel-Unaltuna N."/>
            <person name="Dube D.K."/>
        </authorList>
    </citation>
    <scope>NUCLEOTIDE SEQUENCE [MRNA]</scope>
    <source>
        <tissue>Heart muscle</tissue>
    </source>
</reference>
<name>MYPC3_AMBME</name>
<sequence length="510" mass="57769">ARVKSENLLKKPVVKWFKGKWMDLGTKVGKHLQLQETYDRNTKIYTFEIHIIKAKTTYAGGYRCEAVSKDKFDSCNFNLNMHEASNAGEVDIRSAFRRTGDGKEEAGELDFSALLKKRDSFLLCESRQMKAEGHPRLMSGKSEGASPSEYEKIAFQYGITDLRGLLKRLKKMKKEEKKSTAFLKKLDPAYQVDKGQKIKLVVEVANPDAEVKWKKNGQDIKSSRTKYIFESIGNKRILTINHCSLADDAAYECVIGDEKCFTELFVKEPPYSSHAPLEDQMVMVGERVEFECEVSEEGAQVKWEKDGAELTREETFNYRFKKDGWQETYLLINEPTKEDSGHYTVKTNGWESVANLWVQEKSVLEVLQEVADLTVMARDQAVFKCEVSDENVKGVWVKNGKEVVPNDRITIRHIGRTHKLTIDNVVVAEDEGDYSFIPDGFAFNLSAKLKFLEIKIDFVPRQEPPKINLDVMGPAADTIVVVAGNKLRLDVPISGTPAPTVIWTKGNKVG</sequence>
<keyword id="KW-0009">Actin-binding</keyword>
<keyword id="KW-0130">Cell adhesion</keyword>
<keyword id="KW-0393">Immunoglobulin domain</keyword>
<keyword id="KW-0514">Muscle protein</keyword>
<keyword id="KW-0677">Repeat</keyword>
<keyword id="KW-0787">Thick filament</keyword>
<organism>
    <name type="scientific">Ambystoma mexicanum</name>
    <name type="common">Axolotl</name>
    <dbReference type="NCBI Taxonomy" id="8296"/>
    <lineage>
        <taxon>Eukaryota</taxon>
        <taxon>Metazoa</taxon>
        <taxon>Chordata</taxon>
        <taxon>Craniata</taxon>
        <taxon>Vertebrata</taxon>
        <taxon>Euteleostomi</taxon>
        <taxon>Amphibia</taxon>
        <taxon>Batrachia</taxon>
        <taxon>Caudata</taxon>
        <taxon>Salamandroidea</taxon>
        <taxon>Ambystomatidae</taxon>
        <taxon>Ambystoma</taxon>
    </lineage>
</organism>
<evidence type="ECO:0000250" key="1"/>
<evidence type="ECO:0000305" key="2"/>
<comment type="function">
    <text evidence="1">Thick filament-associated protein located in the crossbridge region of vertebrate striated muscle a bands. In vitro it binds MHC, F-actin and native thin filaments, and modifies the activity of actin-activated myosin ATPase. It may modulate muscle contraction or may play a more structural role (By similarity).</text>
</comment>
<comment type="tissue specificity">
    <text>Heart.</text>
</comment>
<comment type="developmental stage">
    <text>Expression begins between stage 30 and 35/36 in the heart and at stages 35-41 in skeletal muscles. Level of expression in the juvenile skeletal muscle is significantly lower compared to embryonic skeletal muscle.</text>
</comment>
<comment type="similarity">
    <text evidence="2">Belongs to the immunoglobulin superfamily. MyBP family.</text>
</comment>
<protein>
    <recommendedName>
        <fullName>Myosin-binding protein C, cardiac-type</fullName>
        <shortName>Cardiac MyBP-C</shortName>
    </recommendedName>
    <alternativeName>
        <fullName>C-protein, cardiac muscle isoform</fullName>
    </alternativeName>
    <alternativeName>
        <fullName>CPRO axocard 1</fullName>
    </alternativeName>
</protein>
<accession>Q90233</accession>
<proteinExistence type="evidence at transcript level"/>
<feature type="chain" id="PRO_0000072697" description="Myosin-binding protein C, cardiac-type">
    <location>
        <begin position="1" status="less than"/>
        <end position="510" status="greater than"/>
    </location>
</feature>
<feature type="domain" description="Ig-like C2-type 1">
    <location>
        <begin position="177"/>
        <end position="269"/>
    </location>
</feature>
<feature type="domain" description="Ig-like C2-type 2">
    <location>
        <begin position="270"/>
        <end position="347"/>
    </location>
</feature>
<feature type="domain" description="Ig-like C2-type 3">
    <location>
        <begin position="378"/>
        <end position="438"/>
    </location>
</feature>
<feature type="non-terminal residue">
    <location>
        <position position="1"/>
    </location>
</feature>
<feature type="non-terminal residue">
    <location>
        <position position="510"/>
    </location>
</feature>